<keyword id="KW-0963">Cytoplasm</keyword>
<keyword id="KW-0342">GTP-binding</keyword>
<keyword id="KW-0396">Initiation factor</keyword>
<keyword id="KW-0547">Nucleotide-binding</keyword>
<keyword id="KW-0648">Protein biosynthesis</keyword>
<keyword id="KW-1185">Reference proteome</keyword>
<evidence type="ECO:0000250" key="1"/>
<evidence type="ECO:0000255" key="2">
    <source>
        <dbReference type="HAMAP-Rule" id="MF_00100"/>
    </source>
</evidence>
<evidence type="ECO:0000256" key="3">
    <source>
        <dbReference type="SAM" id="MobiDB-lite"/>
    </source>
</evidence>
<gene>
    <name evidence="2" type="primary">infB</name>
    <name type="ordered locus">SO_1204</name>
</gene>
<comment type="function">
    <text evidence="2">One of the essential components for the initiation of protein synthesis. Protects formylmethionyl-tRNA from spontaneous hydrolysis and promotes its binding to the 30S ribosomal subunits. Also involved in the hydrolysis of GTP during the formation of the 70S ribosomal complex.</text>
</comment>
<comment type="subcellular location">
    <subcellularLocation>
        <location evidence="2">Cytoplasm</location>
    </subcellularLocation>
</comment>
<comment type="similarity">
    <text evidence="2">Belongs to the TRAFAC class translation factor GTPase superfamily. Classic translation factor GTPase family. IF-2 subfamily.</text>
</comment>
<protein>
    <recommendedName>
        <fullName evidence="2">Translation initiation factor IF-2</fullName>
    </recommendedName>
</protein>
<reference key="1">
    <citation type="journal article" date="2002" name="Nat. Biotechnol.">
        <title>Genome sequence of the dissimilatory metal ion-reducing bacterium Shewanella oneidensis.</title>
        <authorList>
            <person name="Heidelberg J.F."/>
            <person name="Paulsen I.T."/>
            <person name="Nelson K.E."/>
            <person name="Gaidos E.J."/>
            <person name="Nelson W.C."/>
            <person name="Read T.D."/>
            <person name="Eisen J.A."/>
            <person name="Seshadri R."/>
            <person name="Ward N.L."/>
            <person name="Methe B.A."/>
            <person name="Clayton R.A."/>
            <person name="Meyer T."/>
            <person name="Tsapin A."/>
            <person name="Scott J."/>
            <person name="Beanan M.J."/>
            <person name="Brinkac L.M."/>
            <person name="Daugherty S.C."/>
            <person name="DeBoy R.T."/>
            <person name="Dodson R.J."/>
            <person name="Durkin A.S."/>
            <person name="Haft D.H."/>
            <person name="Kolonay J.F."/>
            <person name="Madupu R."/>
            <person name="Peterson J.D."/>
            <person name="Umayam L.A."/>
            <person name="White O."/>
            <person name="Wolf A.M."/>
            <person name="Vamathevan J.J."/>
            <person name="Weidman J.F."/>
            <person name="Impraim M."/>
            <person name="Lee K."/>
            <person name="Berry K.J."/>
            <person name="Lee C."/>
            <person name="Mueller J."/>
            <person name="Khouri H.M."/>
            <person name="Gill J."/>
            <person name="Utterback T.R."/>
            <person name="McDonald L.A."/>
            <person name="Feldblyum T.V."/>
            <person name="Smith H.O."/>
            <person name="Venter J.C."/>
            <person name="Nealson K.H."/>
            <person name="Fraser C.M."/>
        </authorList>
    </citation>
    <scope>NUCLEOTIDE SEQUENCE [LARGE SCALE GENOMIC DNA]</scope>
    <source>
        <strain>ATCC 700550 / JCM 31522 / CIP 106686 / LMG 19005 / NCIMB 14063 / MR-1</strain>
    </source>
</reference>
<organism>
    <name type="scientific">Shewanella oneidensis (strain ATCC 700550 / JCM 31522 / CIP 106686 / LMG 19005 / NCIMB 14063 / MR-1)</name>
    <dbReference type="NCBI Taxonomy" id="211586"/>
    <lineage>
        <taxon>Bacteria</taxon>
        <taxon>Pseudomonadati</taxon>
        <taxon>Pseudomonadota</taxon>
        <taxon>Gammaproteobacteria</taxon>
        <taxon>Alteromonadales</taxon>
        <taxon>Shewanellaceae</taxon>
        <taxon>Shewanella</taxon>
    </lineage>
</organism>
<accession>Q8EHL5</accession>
<proteinExistence type="inferred from homology"/>
<sequence>MADTTVEKLATEVGKSVERLIEQFSQAGIKKGQADNVSEAEKQQLLDYLKKQHGGDNAPTKMTLQRKTVSTLSVAGNGGQSKDVKVEVRKTRTFVKRDVSDAVLKAEEEAKAKAEAEAKAKAETEAKAKAEAEAKAKVEAEAKAKAEAEAKAKAKAAAEVKVTKDTSPEAEAARIEAERLKAAQEAATKRKQAEEAAKAAEKARLLAEENSKRWAEEERQRLEAERYSDHHITTSKVARAAEDSSDMDEEKRGRRARNKNTAKTKRGGKDARDGREKHMRNRSTAPESMAHGFNKPVAAVNRDVRIGETVTVAELAHLMAVKATEIIKQMMKMGSMVTINQVLDQETAQLVAEEMGHKVVLIRENELEQQVLSERDEEGGVKLEPRAPVVTIMGHVDHGKTSLLDYIRRAKVAAGEAGGITQHIGAYHVETENGMITFLDTPGHAAFTAMRARGAKATDIVVLVVAADDGVMPQTIEAIQHAKAGNVPLIVAVNKMDKPEADIDRVKSELSQHGVMSEDWGGDNMFAFVSAKTGAGVDDLLEGILLQAEVLELKAVRDGMAAGVVIESQLDKGRGPVATILVQEGTLRQGDIVLCGLEYGKIRAMKDENGRSITEAGPSIPVEILGLSGVPSAGDEATVVRDERKAREVALYRQGKFRDVKLARQQKSKLENMFANMTEGEVKELNIVLKADVQGSLEAITDSLMGLSTDEVKVNIIARGVGALTETDATLAAASNAIMVGFNVRADAQARKTIENESVDLRYYSVIYNLIDEVKAAMTGMLSPEFKQQIIGLAEVRDVFKSPKLGAIAGCMVTEGTIKRSAPIRVLRDNVVIFEGELESLRRFKDDVNEVRNGMECGIGVKNYNDVRVGDQIEVFETVEVARTL</sequence>
<feature type="chain" id="PRO_0000137246" description="Translation initiation factor IF-2">
    <location>
        <begin position="1"/>
        <end position="885"/>
    </location>
</feature>
<feature type="domain" description="tr-type G">
    <location>
        <begin position="385"/>
        <end position="554"/>
    </location>
</feature>
<feature type="region of interest" description="Disordered" evidence="3">
    <location>
        <begin position="123"/>
        <end position="289"/>
    </location>
</feature>
<feature type="region of interest" description="G1" evidence="1">
    <location>
        <begin position="394"/>
        <end position="401"/>
    </location>
</feature>
<feature type="region of interest" description="G2" evidence="1">
    <location>
        <begin position="419"/>
        <end position="423"/>
    </location>
</feature>
<feature type="region of interest" description="G3" evidence="1">
    <location>
        <begin position="440"/>
        <end position="443"/>
    </location>
</feature>
<feature type="region of interest" description="G4" evidence="1">
    <location>
        <begin position="494"/>
        <end position="497"/>
    </location>
</feature>
<feature type="region of interest" description="G5" evidence="1">
    <location>
        <begin position="530"/>
        <end position="532"/>
    </location>
</feature>
<feature type="compositionally biased region" description="Basic and acidic residues" evidence="3">
    <location>
        <begin position="123"/>
        <end position="232"/>
    </location>
</feature>
<feature type="compositionally biased region" description="Basic residues" evidence="3">
    <location>
        <begin position="253"/>
        <end position="266"/>
    </location>
</feature>
<feature type="compositionally biased region" description="Basic and acidic residues" evidence="3">
    <location>
        <begin position="267"/>
        <end position="276"/>
    </location>
</feature>
<feature type="binding site" evidence="2">
    <location>
        <begin position="394"/>
        <end position="401"/>
    </location>
    <ligand>
        <name>GTP</name>
        <dbReference type="ChEBI" id="CHEBI:37565"/>
    </ligand>
</feature>
<feature type="binding site" evidence="2">
    <location>
        <begin position="440"/>
        <end position="444"/>
    </location>
    <ligand>
        <name>GTP</name>
        <dbReference type="ChEBI" id="CHEBI:37565"/>
    </ligand>
</feature>
<feature type="binding site" evidence="2">
    <location>
        <begin position="494"/>
        <end position="497"/>
    </location>
    <ligand>
        <name>GTP</name>
        <dbReference type="ChEBI" id="CHEBI:37565"/>
    </ligand>
</feature>
<name>IF2_SHEON</name>
<dbReference type="EMBL" id="AE014299">
    <property type="protein sequence ID" value="AAN54274.1"/>
    <property type="molecule type" value="Genomic_DNA"/>
</dbReference>
<dbReference type="RefSeq" id="NP_716829.1">
    <property type="nucleotide sequence ID" value="NC_004347.2"/>
</dbReference>
<dbReference type="RefSeq" id="WP_011071434.1">
    <property type="nucleotide sequence ID" value="NC_004347.2"/>
</dbReference>
<dbReference type="SMR" id="Q8EHL5"/>
<dbReference type="STRING" id="211586.SO_1204"/>
<dbReference type="PaxDb" id="211586-SO_1204"/>
<dbReference type="KEGG" id="son:SO_1204"/>
<dbReference type="PATRIC" id="fig|211586.12.peg.1156"/>
<dbReference type="eggNOG" id="COG0532">
    <property type="taxonomic scope" value="Bacteria"/>
</dbReference>
<dbReference type="HOGENOM" id="CLU_006301_6_3_6"/>
<dbReference type="OrthoDB" id="9811804at2"/>
<dbReference type="PhylomeDB" id="Q8EHL5"/>
<dbReference type="BioCyc" id="SONE211586:G1GMP-1116-MONOMER"/>
<dbReference type="Proteomes" id="UP000008186">
    <property type="component" value="Chromosome"/>
</dbReference>
<dbReference type="GO" id="GO:0005737">
    <property type="term" value="C:cytoplasm"/>
    <property type="evidence" value="ECO:0000318"/>
    <property type="project" value="GO_Central"/>
</dbReference>
<dbReference type="GO" id="GO:0005829">
    <property type="term" value="C:cytosol"/>
    <property type="evidence" value="ECO:0000318"/>
    <property type="project" value="GO_Central"/>
</dbReference>
<dbReference type="GO" id="GO:0005525">
    <property type="term" value="F:GTP binding"/>
    <property type="evidence" value="ECO:0007669"/>
    <property type="project" value="UniProtKB-KW"/>
</dbReference>
<dbReference type="GO" id="GO:0003924">
    <property type="term" value="F:GTPase activity"/>
    <property type="evidence" value="ECO:0007669"/>
    <property type="project" value="UniProtKB-UniRule"/>
</dbReference>
<dbReference type="GO" id="GO:0097216">
    <property type="term" value="F:guanosine tetraphosphate binding"/>
    <property type="evidence" value="ECO:0007669"/>
    <property type="project" value="UniProtKB-ARBA"/>
</dbReference>
<dbReference type="GO" id="GO:0003743">
    <property type="term" value="F:translation initiation factor activity"/>
    <property type="evidence" value="ECO:0000318"/>
    <property type="project" value="GO_Central"/>
</dbReference>
<dbReference type="GO" id="GO:0006413">
    <property type="term" value="P:translational initiation"/>
    <property type="evidence" value="ECO:0000318"/>
    <property type="project" value="GO_Central"/>
</dbReference>
<dbReference type="CDD" id="cd01887">
    <property type="entry name" value="IF2_eIF5B"/>
    <property type="match status" value="1"/>
</dbReference>
<dbReference type="CDD" id="cd03702">
    <property type="entry name" value="IF2_mtIF2_II"/>
    <property type="match status" value="1"/>
</dbReference>
<dbReference type="CDD" id="cd03692">
    <property type="entry name" value="mtIF2_IVc"/>
    <property type="match status" value="1"/>
</dbReference>
<dbReference type="FunFam" id="2.40.30.10:FF:000007">
    <property type="entry name" value="Translation initiation factor IF-2"/>
    <property type="match status" value="1"/>
</dbReference>
<dbReference type="FunFam" id="2.40.30.10:FF:000008">
    <property type="entry name" value="Translation initiation factor IF-2"/>
    <property type="match status" value="1"/>
</dbReference>
<dbReference type="FunFam" id="3.40.50.10050:FF:000001">
    <property type="entry name" value="Translation initiation factor IF-2"/>
    <property type="match status" value="1"/>
</dbReference>
<dbReference type="FunFam" id="3.40.50.300:FF:000019">
    <property type="entry name" value="Translation initiation factor IF-2"/>
    <property type="match status" value="1"/>
</dbReference>
<dbReference type="Gene3D" id="3.40.50.300">
    <property type="entry name" value="P-loop containing nucleotide triphosphate hydrolases"/>
    <property type="match status" value="1"/>
</dbReference>
<dbReference type="Gene3D" id="3.30.56.50">
    <property type="entry name" value="Putative DNA-binding domain, N-terminal subdomain of bacterial translation initiation factor IF2"/>
    <property type="match status" value="1"/>
</dbReference>
<dbReference type="Gene3D" id="2.40.30.10">
    <property type="entry name" value="Translation factors"/>
    <property type="match status" value="2"/>
</dbReference>
<dbReference type="Gene3D" id="3.40.50.10050">
    <property type="entry name" value="Translation initiation factor IF- 2, domain 3"/>
    <property type="match status" value="1"/>
</dbReference>
<dbReference type="HAMAP" id="MF_00100_B">
    <property type="entry name" value="IF_2_B"/>
    <property type="match status" value="1"/>
</dbReference>
<dbReference type="InterPro" id="IPR009061">
    <property type="entry name" value="DNA-bd_dom_put_sf"/>
</dbReference>
<dbReference type="InterPro" id="IPR053905">
    <property type="entry name" value="EF-G-like_DII"/>
</dbReference>
<dbReference type="InterPro" id="IPR004161">
    <property type="entry name" value="EFTu-like_2"/>
</dbReference>
<dbReference type="InterPro" id="IPR013575">
    <property type="entry name" value="IF2_assoc_dom_bac"/>
</dbReference>
<dbReference type="InterPro" id="IPR044145">
    <property type="entry name" value="IF2_II"/>
</dbReference>
<dbReference type="InterPro" id="IPR006847">
    <property type="entry name" value="IF2_N"/>
</dbReference>
<dbReference type="InterPro" id="IPR027417">
    <property type="entry name" value="P-loop_NTPase"/>
</dbReference>
<dbReference type="InterPro" id="IPR005225">
    <property type="entry name" value="Small_GTP-bd"/>
</dbReference>
<dbReference type="InterPro" id="IPR000795">
    <property type="entry name" value="T_Tr_GTP-bd_dom"/>
</dbReference>
<dbReference type="InterPro" id="IPR000178">
    <property type="entry name" value="TF_IF2_bacterial-like"/>
</dbReference>
<dbReference type="InterPro" id="IPR015760">
    <property type="entry name" value="TIF_IF2"/>
</dbReference>
<dbReference type="InterPro" id="IPR023115">
    <property type="entry name" value="TIF_IF2_dom3"/>
</dbReference>
<dbReference type="InterPro" id="IPR036925">
    <property type="entry name" value="TIF_IF2_dom3_sf"/>
</dbReference>
<dbReference type="InterPro" id="IPR009000">
    <property type="entry name" value="Transl_B-barrel_sf"/>
</dbReference>
<dbReference type="NCBIfam" id="TIGR00487">
    <property type="entry name" value="IF-2"/>
    <property type="match status" value="1"/>
</dbReference>
<dbReference type="NCBIfam" id="TIGR00231">
    <property type="entry name" value="small_GTP"/>
    <property type="match status" value="1"/>
</dbReference>
<dbReference type="PANTHER" id="PTHR43381:SF5">
    <property type="entry name" value="TR-TYPE G DOMAIN-CONTAINING PROTEIN"/>
    <property type="match status" value="1"/>
</dbReference>
<dbReference type="PANTHER" id="PTHR43381">
    <property type="entry name" value="TRANSLATION INITIATION FACTOR IF-2-RELATED"/>
    <property type="match status" value="1"/>
</dbReference>
<dbReference type="Pfam" id="PF22042">
    <property type="entry name" value="EF-G_D2"/>
    <property type="match status" value="1"/>
</dbReference>
<dbReference type="Pfam" id="PF00009">
    <property type="entry name" value="GTP_EFTU"/>
    <property type="match status" value="1"/>
</dbReference>
<dbReference type="Pfam" id="PF03144">
    <property type="entry name" value="GTP_EFTU_D2"/>
    <property type="match status" value="1"/>
</dbReference>
<dbReference type="Pfam" id="PF11987">
    <property type="entry name" value="IF-2"/>
    <property type="match status" value="1"/>
</dbReference>
<dbReference type="Pfam" id="PF08364">
    <property type="entry name" value="IF2_assoc"/>
    <property type="match status" value="1"/>
</dbReference>
<dbReference type="Pfam" id="PF04760">
    <property type="entry name" value="IF2_N"/>
    <property type="match status" value="2"/>
</dbReference>
<dbReference type="SUPFAM" id="SSF52156">
    <property type="entry name" value="Initiation factor IF2/eIF5b, domain 3"/>
    <property type="match status" value="1"/>
</dbReference>
<dbReference type="SUPFAM" id="SSF52540">
    <property type="entry name" value="P-loop containing nucleoside triphosphate hydrolases"/>
    <property type="match status" value="1"/>
</dbReference>
<dbReference type="SUPFAM" id="SSF46955">
    <property type="entry name" value="Putative DNA-binding domain"/>
    <property type="match status" value="1"/>
</dbReference>
<dbReference type="SUPFAM" id="SSF50447">
    <property type="entry name" value="Translation proteins"/>
    <property type="match status" value="2"/>
</dbReference>
<dbReference type="PROSITE" id="PS51722">
    <property type="entry name" value="G_TR_2"/>
    <property type="match status" value="1"/>
</dbReference>
<dbReference type="PROSITE" id="PS01176">
    <property type="entry name" value="IF2"/>
    <property type="match status" value="1"/>
</dbReference>